<feature type="chain" id="PRO_0000127821" description="Uncharacterized protein AF_0069">
    <location>
        <begin position="1"/>
        <end position="120"/>
    </location>
</feature>
<reference key="1">
    <citation type="journal article" date="1997" name="Nature">
        <title>The complete genome sequence of the hyperthermophilic, sulphate-reducing archaeon Archaeoglobus fulgidus.</title>
        <authorList>
            <person name="Klenk H.-P."/>
            <person name="Clayton R.A."/>
            <person name="Tomb J.-F."/>
            <person name="White O."/>
            <person name="Nelson K.E."/>
            <person name="Ketchum K.A."/>
            <person name="Dodson R.J."/>
            <person name="Gwinn M.L."/>
            <person name="Hickey E.K."/>
            <person name="Peterson J.D."/>
            <person name="Richardson D.L."/>
            <person name="Kerlavage A.R."/>
            <person name="Graham D.E."/>
            <person name="Kyrpides N.C."/>
            <person name="Fleischmann R.D."/>
            <person name="Quackenbush J."/>
            <person name="Lee N.H."/>
            <person name="Sutton G.G."/>
            <person name="Gill S.R."/>
            <person name="Kirkness E.F."/>
            <person name="Dougherty B.A."/>
            <person name="McKenney K."/>
            <person name="Adams M.D."/>
            <person name="Loftus B.J."/>
            <person name="Peterson S.N."/>
            <person name="Reich C.I."/>
            <person name="McNeil L.K."/>
            <person name="Badger J.H."/>
            <person name="Glodek A."/>
            <person name="Zhou L."/>
            <person name="Overbeek R."/>
            <person name="Gocayne J.D."/>
            <person name="Weidman J.F."/>
            <person name="McDonald L.A."/>
            <person name="Utterback T.R."/>
            <person name="Cotton M.D."/>
            <person name="Spriggs T."/>
            <person name="Artiach P."/>
            <person name="Kaine B.P."/>
            <person name="Sykes S.M."/>
            <person name="Sadow P.W."/>
            <person name="D'Andrea K.P."/>
            <person name="Bowman C."/>
            <person name="Fujii C."/>
            <person name="Garland S.A."/>
            <person name="Mason T.M."/>
            <person name="Olsen G.J."/>
            <person name="Fraser C.M."/>
            <person name="Smith H.O."/>
            <person name="Woese C.R."/>
            <person name="Venter J.C."/>
        </authorList>
    </citation>
    <scope>NUCLEOTIDE SEQUENCE [LARGE SCALE GENOMIC DNA]</scope>
    <source>
        <strain>ATCC 49558 / DSM 4304 / JCM 9628 / NBRC 100126 / VC-16</strain>
    </source>
</reference>
<organism>
    <name type="scientific">Archaeoglobus fulgidus (strain ATCC 49558 / DSM 4304 / JCM 9628 / NBRC 100126 / VC-16)</name>
    <dbReference type="NCBI Taxonomy" id="224325"/>
    <lineage>
        <taxon>Archaea</taxon>
        <taxon>Methanobacteriati</taxon>
        <taxon>Methanobacteriota</taxon>
        <taxon>Archaeoglobi</taxon>
        <taxon>Archaeoglobales</taxon>
        <taxon>Archaeoglobaceae</taxon>
        <taxon>Archaeoglobus</taxon>
    </lineage>
</organism>
<protein>
    <recommendedName>
        <fullName>Uncharacterized protein AF_0069</fullName>
    </recommendedName>
</protein>
<accession>O30167</accession>
<proteinExistence type="predicted"/>
<gene>
    <name type="ordered locus">AF_0069</name>
</gene>
<sequence length="120" mass="13848">MSEFKLGDIFGCEAVKNFGAALRKALRIGDDYASLVELEYVETKEQFEEVIKKFLRRYETIARRGYKGKELSRLSEKDLEELMSLVDKYDVKPIRAALISYALVKSEREDEATLKSEEVV</sequence>
<dbReference type="EMBL" id="AE000782">
    <property type="protein sequence ID" value="AAB91175.1"/>
    <property type="molecule type" value="Genomic_DNA"/>
</dbReference>
<dbReference type="PIR" id="E69258">
    <property type="entry name" value="E69258"/>
</dbReference>
<dbReference type="RefSeq" id="WP_010877583.1">
    <property type="nucleotide sequence ID" value="NC_000917.1"/>
</dbReference>
<dbReference type="SMR" id="O30167"/>
<dbReference type="STRING" id="224325.AF_0069"/>
<dbReference type="PaxDb" id="224325-AF_0069"/>
<dbReference type="EnsemblBacteria" id="AAB91175">
    <property type="protein sequence ID" value="AAB91175"/>
    <property type="gene ID" value="AF_0069"/>
</dbReference>
<dbReference type="KEGG" id="afu:AF_0069"/>
<dbReference type="eggNOG" id="arCOG10382">
    <property type="taxonomic scope" value="Archaea"/>
</dbReference>
<dbReference type="HOGENOM" id="CLU_2091427_0_0_2"/>
<dbReference type="OrthoDB" id="93560at2157"/>
<dbReference type="Proteomes" id="UP000002199">
    <property type="component" value="Chromosome"/>
</dbReference>
<keyword id="KW-1185">Reference proteome</keyword>
<name>Y069_ARCFU</name>